<proteinExistence type="inferred from homology"/>
<name>GCSH_ACIBC</name>
<sequence length="124" mass="13553">MNHPSELKYARTHEWVKIEGDLVITGITDHAQDELGDLVYVETPEVGSQVTAGEQAGVVESVKTASDIHAPVSGTVVEVNTDLEDDPDFVNEDPYGKGWIYKIKPDNIADVEKLLTNAEYEAGL</sequence>
<comment type="function">
    <text evidence="1">The glycine cleavage system catalyzes the degradation of glycine. The H protein shuttles the methylamine group of glycine from the P protein to the T protein.</text>
</comment>
<comment type="cofactor">
    <cofactor evidence="1">
        <name>(R)-lipoate</name>
        <dbReference type="ChEBI" id="CHEBI:83088"/>
    </cofactor>
    <text evidence="1">Binds 1 lipoyl cofactor covalently.</text>
</comment>
<comment type="subunit">
    <text evidence="1">The glycine cleavage system is composed of four proteins: P, T, L and H.</text>
</comment>
<comment type="similarity">
    <text evidence="1">Belongs to the GcvH family.</text>
</comment>
<dbReference type="EMBL" id="CP000863">
    <property type="protein sequence ID" value="ACC56890.1"/>
    <property type="molecule type" value="Genomic_DNA"/>
</dbReference>
<dbReference type="RefSeq" id="WP_001016343.1">
    <property type="nucleotide sequence ID" value="NZ_CP031380.1"/>
</dbReference>
<dbReference type="SMR" id="B2HZ03"/>
<dbReference type="GeneID" id="92893760"/>
<dbReference type="KEGG" id="abc:ACICU_01578"/>
<dbReference type="HOGENOM" id="CLU_097408_2_0_6"/>
<dbReference type="Proteomes" id="UP000008839">
    <property type="component" value="Chromosome"/>
</dbReference>
<dbReference type="GO" id="GO:0005829">
    <property type="term" value="C:cytosol"/>
    <property type="evidence" value="ECO:0007669"/>
    <property type="project" value="TreeGrafter"/>
</dbReference>
<dbReference type="GO" id="GO:0005960">
    <property type="term" value="C:glycine cleavage complex"/>
    <property type="evidence" value="ECO:0007669"/>
    <property type="project" value="InterPro"/>
</dbReference>
<dbReference type="GO" id="GO:0019464">
    <property type="term" value="P:glycine decarboxylation via glycine cleavage system"/>
    <property type="evidence" value="ECO:0007669"/>
    <property type="project" value="UniProtKB-UniRule"/>
</dbReference>
<dbReference type="CDD" id="cd06848">
    <property type="entry name" value="GCS_H"/>
    <property type="match status" value="1"/>
</dbReference>
<dbReference type="Gene3D" id="2.40.50.100">
    <property type="match status" value="1"/>
</dbReference>
<dbReference type="HAMAP" id="MF_00272">
    <property type="entry name" value="GcvH"/>
    <property type="match status" value="1"/>
</dbReference>
<dbReference type="InterPro" id="IPR003016">
    <property type="entry name" value="2-oxoA_DH_lipoyl-BS"/>
</dbReference>
<dbReference type="InterPro" id="IPR000089">
    <property type="entry name" value="Biotin_lipoyl"/>
</dbReference>
<dbReference type="InterPro" id="IPR002930">
    <property type="entry name" value="GCV_H"/>
</dbReference>
<dbReference type="InterPro" id="IPR033753">
    <property type="entry name" value="GCV_H/Fam206"/>
</dbReference>
<dbReference type="InterPro" id="IPR017453">
    <property type="entry name" value="GCV_H_sub"/>
</dbReference>
<dbReference type="InterPro" id="IPR011053">
    <property type="entry name" value="Single_hybrid_motif"/>
</dbReference>
<dbReference type="NCBIfam" id="TIGR00527">
    <property type="entry name" value="gcvH"/>
    <property type="match status" value="1"/>
</dbReference>
<dbReference type="NCBIfam" id="NF002270">
    <property type="entry name" value="PRK01202.1"/>
    <property type="match status" value="1"/>
</dbReference>
<dbReference type="PANTHER" id="PTHR11715">
    <property type="entry name" value="GLYCINE CLEAVAGE SYSTEM H PROTEIN"/>
    <property type="match status" value="1"/>
</dbReference>
<dbReference type="PANTHER" id="PTHR11715:SF3">
    <property type="entry name" value="GLYCINE CLEAVAGE SYSTEM H PROTEIN-RELATED"/>
    <property type="match status" value="1"/>
</dbReference>
<dbReference type="Pfam" id="PF01597">
    <property type="entry name" value="GCV_H"/>
    <property type="match status" value="1"/>
</dbReference>
<dbReference type="SUPFAM" id="SSF51230">
    <property type="entry name" value="Single hybrid motif"/>
    <property type="match status" value="1"/>
</dbReference>
<dbReference type="PROSITE" id="PS50968">
    <property type="entry name" value="BIOTINYL_LIPOYL"/>
    <property type="match status" value="1"/>
</dbReference>
<dbReference type="PROSITE" id="PS00189">
    <property type="entry name" value="LIPOYL"/>
    <property type="match status" value="1"/>
</dbReference>
<gene>
    <name evidence="1" type="primary">gcvH</name>
    <name type="ordered locus">ACICU_01578</name>
</gene>
<keyword id="KW-0450">Lipoyl</keyword>
<protein>
    <recommendedName>
        <fullName evidence="1">Glycine cleavage system H protein</fullName>
    </recommendedName>
</protein>
<accession>B2HZ03</accession>
<organism>
    <name type="scientific">Acinetobacter baumannii (strain ACICU)</name>
    <dbReference type="NCBI Taxonomy" id="405416"/>
    <lineage>
        <taxon>Bacteria</taxon>
        <taxon>Pseudomonadati</taxon>
        <taxon>Pseudomonadota</taxon>
        <taxon>Gammaproteobacteria</taxon>
        <taxon>Moraxellales</taxon>
        <taxon>Moraxellaceae</taxon>
        <taxon>Acinetobacter</taxon>
        <taxon>Acinetobacter calcoaceticus/baumannii complex</taxon>
    </lineage>
</organism>
<reference key="1">
    <citation type="journal article" date="2008" name="Antimicrob. Agents Chemother.">
        <title>Whole-genome pyrosequencing of an epidemic multidrug-resistant Acinetobacter baumannii strain belonging to the European clone II group.</title>
        <authorList>
            <person name="Iacono M."/>
            <person name="Villa L."/>
            <person name="Fortini D."/>
            <person name="Bordoni R."/>
            <person name="Imperi F."/>
            <person name="Bonnal R.J."/>
            <person name="Sicheritz-Ponten T."/>
            <person name="De Bellis G."/>
            <person name="Visca P."/>
            <person name="Cassone A."/>
            <person name="Carattoli A."/>
        </authorList>
    </citation>
    <scope>NUCLEOTIDE SEQUENCE [LARGE SCALE GENOMIC DNA]</scope>
    <source>
        <strain>ACICU</strain>
    </source>
</reference>
<evidence type="ECO:0000255" key="1">
    <source>
        <dbReference type="HAMAP-Rule" id="MF_00272"/>
    </source>
</evidence>
<evidence type="ECO:0000255" key="2">
    <source>
        <dbReference type="PROSITE-ProRule" id="PRU01066"/>
    </source>
</evidence>
<feature type="chain" id="PRO_1000114490" description="Glycine cleavage system H protein">
    <location>
        <begin position="1"/>
        <end position="124"/>
    </location>
</feature>
<feature type="domain" description="Lipoyl-binding" evidence="2">
    <location>
        <begin position="22"/>
        <end position="104"/>
    </location>
</feature>
<feature type="modified residue" description="N6-lipoyllysine" evidence="1">
    <location>
        <position position="63"/>
    </location>
</feature>